<protein>
    <recommendedName>
        <fullName evidence="1">Neural cell adhesion molecule 1</fullName>
        <shortName>N-CAM-1</shortName>
        <shortName>NCAM-1</shortName>
    </recommendedName>
</protein>
<evidence type="ECO:0000250" key="1">
    <source>
        <dbReference type="UniProtKB" id="P13591"/>
    </source>
</evidence>
<evidence type="ECO:0000255" key="2"/>
<evidence type="ECO:0000255" key="3">
    <source>
        <dbReference type="PROSITE-ProRule" id="PRU00114"/>
    </source>
</evidence>
<evidence type="ECO:0000255" key="4">
    <source>
        <dbReference type="PROSITE-ProRule" id="PRU00316"/>
    </source>
</evidence>
<evidence type="ECO:0000256" key="5">
    <source>
        <dbReference type="SAM" id="MobiDB-lite"/>
    </source>
</evidence>
<evidence type="ECO:0000269" key="6">
    <source>
    </source>
</evidence>
<evidence type="ECO:0000305" key="7"/>
<evidence type="ECO:0007744" key="8">
    <source>
        <dbReference type="PDB" id="1IE5"/>
    </source>
</evidence>
<evidence type="ECO:0007829" key="9">
    <source>
        <dbReference type="PDB" id="1IE5"/>
    </source>
</evidence>
<keyword id="KW-0002">3D-structure</keyword>
<keyword id="KW-0025">Alternative splicing</keyword>
<keyword id="KW-0130">Cell adhesion</keyword>
<keyword id="KW-1003">Cell membrane</keyword>
<keyword id="KW-0903">Direct protein sequencing</keyword>
<keyword id="KW-1015">Disulfide bond</keyword>
<keyword id="KW-0325">Glycoprotein</keyword>
<keyword id="KW-0393">Immunoglobulin domain</keyword>
<keyword id="KW-0472">Membrane</keyword>
<keyword id="KW-1185">Reference proteome</keyword>
<keyword id="KW-0677">Repeat</keyword>
<keyword id="KW-0732">Signal</keyword>
<keyword id="KW-0812">Transmembrane</keyword>
<keyword id="KW-1133">Transmembrane helix</keyword>
<organism>
    <name type="scientific">Gallus gallus</name>
    <name type="common">Chicken</name>
    <dbReference type="NCBI Taxonomy" id="9031"/>
    <lineage>
        <taxon>Eukaryota</taxon>
        <taxon>Metazoa</taxon>
        <taxon>Chordata</taxon>
        <taxon>Craniata</taxon>
        <taxon>Vertebrata</taxon>
        <taxon>Euteleostomi</taxon>
        <taxon>Archelosauria</taxon>
        <taxon>Archosauria</taxon>
        <taxon>Dinosauria</taxon>
        <taxon>Saurischia</taxon>
        <taxon>Theropoda</taxon>
        <taxon>Coelurosauria</taxon>
        <taxon>Aves</taxon>
        <taxon>Neognathae</taxon>
        <taxon>Galloanserae</taxon>
        <taxon>Galliformes</taxon>
        <taxon>Phasianidae</taxon>
        <taxon>Phasianinae</taxon>
        <taxon>Gallus</taxon>
    </lineage>
</organism>
<comment type="function">
    <text>This protein is a cell adhesion molecule involved in neuron-neuron adhesion, neurite fasciculation, outgrowth of neurites, etc.</text>
</comment>
<comment type="subcellular location">
    <subcellularLocation>
        <location evidence="7">Cell membrane</location>
        <topology evidence="7">Single-pass membrane protein</topology>
    </subcellularLocation>
</comment>
<comment type="alternative products">
    <event type="alternative splicing"/>
    <isoform>
        <id>P13590-1</id>
        <name>A</name>
        <name>N-CAM 180</name>
        <sequence type="displayed"/>
    </isoform>
    <isoform>
        <id>P13590-2</id>
        <name>B</name>
        <name>N-CAM 140</name>
        <sequence type="described" ref="VSP_002585"/>
    </isoform>
    <isoform>
        <id>P13590-3</id>
        <name>C</name>
        <sequence type="described" ref="VSP_002586"/>
    </isoform>
    <isoform>
        <id>P13590-4</id>
        <name>D</name>
        <sequence type="described" ref="VSP_002583 VSP_002584"/>
    </isoform>
</comment>
<comment type="PTM">
    <text evidence="1">Polysialylated by ST8SIA2 and ST8SIA4. Polysialylation modulates cell interactions by confering both attractive and repulsive properties that are highly regulated by ST8SIA2 and ST8SIA4. Polysialylation is formed on a-2,3-linked sialic acid of core glycans.</text>
</comment>
<gene>
    <name evidence="1" type="primary">NCAM1</name>
</gene>
<feature type="signal peptide">
    <location>
        <begin position="1"/>
        <end position="19"/>
    </location>
</feature>
<feature type="chain" id="PRO_0000015007" description="Neural cell adhesion molecule 1">
    <location>
        <begin position="20"/>
        <end position="1091"/>
    </location>
</feature>
<feature type="topological domain" description="Extracellular" evidence="2">
    <location>
        <begin position="20"/>
        <end position="711"/>
    </location>
</feature>
<feature type="transmembrane region" description="Helical" evidence="2">
    <location>
        <begin position="712"/>
        <end position="729"/>
    </location>
</feature>
<feature type="topological domain" description="Cytoplasmic" evidence="2">
    <location>
        <begin position="730"/>
        <end position="1091"/>
    </location>
</feature>
<feature type="domain" description="Ig-like C2-type 1">
    <location>
        <begin position="20"/>
        <end position="113"/>
    </location>
</feature>
<feature type="domain" description="Ig-like C2-type 2">
    <location>
        <begin position="116"/>
        <end position="205"/>
    </location>
</feature>
<feature type="domain" description="Ig-like C2-type 3">
    <location>
        <begin position="212"/>
        <end position="301"/>
    </location>
</feature>
<feature type="domain" description="Ig-like C2-type 4">
    <location>
        <begin position="308"/>
        <end position="403"/>
    </location>
</feature>
<feature type="domain" description="Ig-like C2-type 5">
    <location>
        <begin position="406"/>
        <end position="495"/>
    </location>
</feature>
<feature type="domain" description="Fibronectin type-III 1" evidence="4">
    <location>
        <begin position="499"/>
        <end position="598"/>
    </location>
</feature>
<feature type="domain" description="Fibronectin type-III 2" evidence="4">
    <location>
        <begin position="600"/>
        <end position="696"/>
    </location>
</feature>
<feature type="region of interest" description="Disordered" evidence="5">
    <location>
        <begin position="756"/>
        <end position="809"/>
    </location>
</feature>
<feature type="region of interest" description="Disordered" evidence="5">
    <location>
        <begin position="840"/>
        <end position="916"/>
    </location>
</feature>
<feature type="region of interest" description="Disordered" evidence="5">
    <location>
        <begin position="937"/>
        <end position="1023"/>
    </location>
</feature>
<feature type="region of interest" description="Disordered" evidence="5">
    <location>
        <begin position="1041"/>
        <end position="1091"/>
    </location>
</feature>
<feature type="compositionally biased region" description="Basic and acidic residues" evidence="5">
    <location>
        <begin position="758"/>
        <end position="799"/>
    </location>
</feature>
<feature type="compositionally biased region" description="Low complexity" evidence="5">
    <location>
        <begin position="845"/>
        <end position="856"/>
    </location>
</feature>
<feature type="compositionally biased region" description="Polar residues" evidence="5">
    <location>
        <begin position="904"/>
        <end position="916"/>
    </location>
</feature>
<feature type="compositionally biased region" description="Polar residues" evidence="5">
    <location>
        <begin position="980"/>
        <end position="1012"/>
    </location>
</feature>
<feature type="compositionally biased region" description="Basic and acidic residues" evidence="5">
    <location>
        <begin position="1013"/>
        <end position="1023"/>
    </location>
</feature>
<feature type="compositionally biased region" description="Basic and acidic residues" evidence="5">
    <location>
        <begin position="1068"/>
        <end position="1091"/>
    </location>
</feature>
<feature type="binding site" evidence="2">
    <location>
        <begin position="152"/>
        <end position="156"/>
    </location>
    <ligand>
        <name>heparin</name>
        <dbReference type="ChEBI" id="CHEBI:28304"/>
    </ligand>
</feature>
<feature type="binding site" evidence="2">
    <location>
        <begin position="161"/>
        <end position="165"/>
    </location>
    <ligand>
        <name>heparin</name>
        <dbReference type="ChEBI" id="CHEBI:28304"/>
    </ligand>
</feature>
<feature type="glycosylation site" description="N-linked (GlcNAc...) asparagine">
    <location>
        <position position="222"/>
    </location>
</feature>
<feature type="glycosylation site" description="N-linked (GlcNAc...) asparagine" evidence="2">
    <location>
        <position position="315"/>
    </location>
</feature>
<feature type="glycosylation site" description="N-linked (GlcNAc...) asparagine" evidence="2">
    <location>
        <position position="347"/>
    </location>
</feature>
<feature type="glycosylation site" description="N-linked (GlcNAc...) asparagine" evidence="2">
    <location>
        <position position="423"/>
    </location>
</feature>
<feature type="glycosylation site" description="N-linked (GlcNAc...) asparagine" evidence="2">
    <location>
        <position position="449"/>
    </location>
</feature>
<feature type="glycosylation site" description="N-linked (GlcNAc...) asparagine" evidence="2">
    <location>
        <position position="478"/>
    </location>
</feature>
<feature type="disulfide bond" evidence="3">
    <location>
        <begin position="41"/>
        <end position="96"/>
    </location>
</feature>
<feature type="disulfide bond" evidence="3">
    <location>
        <begin position="139"/>
        <end position="189"/>
    </location>
</feature>
<feature type="disulfide bond" evidence="6 8">
    <location>
        <begin position="235"/>
        <end position="287"/>
    </location>
</feature>
<feature type="disulfide bond" evidence="3">
    <location>
        <begin position="329"/>
        <end position="385"/>
    </location>
</feature>
<feature type="disulfide bond" evidence="3">
    <location>
        <begin position="426"/>
        <end position="479"/>
    </location>
</feature>
<feature type="splice variant" id="VSP_002583" description="In isoform D." evidence="7">
    <original>STSPTSGLGTAAIVGILIVIFVLLL</original>
    <variation>TLGSPSTSSSFVSLLLSAVTLLLLC</variation>
    <location>
        <begin position="702"/>
        <end position="726"/>
    </location>
</feature>
<feature type="splice variant" id="VSP_002584" description="In isoform D." evidence="7">
    <location>
        <begin position="727"/>
        <end position="1091"/>
    </location>
</feature>
<feature type="splice variant" id="VSP_002585" description="In isoform B." evidence="7">
    <location>
        <begin position="771"/>
        <end position="809"/>
    </location>
</feature>
<feature type="splice variant" id="VSP_002586" description="In isoform C." evidence="7">
    <location>
        <begin position="810"/>
        <end position="1070"/>
    </location>
</feature>
<feature type="strand" evidence="9">
    <location>
        <begin position="203"/>
        <end position="206"/>
    </location>
</feature>
<feature type="strand" evidence="9">
    <location>
        <begin position="210"/>
        <end position="216"/>
    </location>
</feature>
<feature type="strand" evidence="9">
    <location>
        <begin position="219"/>
        <end position="224"/>
    </location>
</feature>
<feature type="strand" evidence="9">
    <location>
        <begin position="229"/>
        <end position="233"/>
    </location>
</feature>
<feature type="strand" evidence="9">
    <location>
        <begin position="235"/>
        <end position="241"/>
    </location>
</feature>
<feature type="strand" evidence="9">
    <location>
        <begin position="244"/>
        <end position="249"/>
    </location>
</feature>
<feature type="turn" evidence="9">
    <location>
        <begin position="256"/>
        <end position="258"/>
    </location>
</feature>
<feature type="strand" evidence="9">
    <location>
        <begin position="267"/>
        <end position="269"/>
    </location>
</feature>
<feature type="strand" evidence="9">
    <location>
        <begin position="272"/>
        <end position="277"/>
    </location>
</feature>
<feature type="strand" evidence="9">
    <location>
        <begin position="283"/>
        <end position="290"/>
    </location>
</feature>
<feature type="strand" evidence="9">
    <location>
        <begin position="295"/>
        <end position="305"/>
    </location>
</feature>
<accession>P13590</accession>
<accession>Q90918</accession>
<accession>Q90919</accession>
<proteinExistence type="evidence at protein level"/>
<sequence>MLPAAALPWTLFFLGAAASLQVDIVPSQGEISVGESKFFLCQVAGEAKYKDISWFSPNGEKLTPNQQRISVVRNDDFSSTLTIYNANIDDAGIYKCVVSSVEEGDSEATVNVKIFQKLMFKNAPTPQEFKEGDDAVIVCDVVSSLPPTIIWKHKGRDVMLKKDVRFIVLSNNYLQIRGIKKTDEGTYRCEGRILARGEINFKDIQVIVNVPPSVRARQSTMNATANLSQSVTLACDADGFPEPTMTWTKDGEPIEQEDNEEKYSFNYDGSELIIKKVDKSDEAEYICIAENKAGEQDATIHLKVFAKPKITYVENKTAMELEDQITLTCEASGDPIPSITWKTSTRNISNEEKTLDGRIVVRSHARVSSLTLKEIQYTDAGEYVCTASNTIGQDSQAMYLEVQYAPKLQGPVAVYTWEGNQVNITCEVFAYPSAVISWFRDGQLLPSSNYSNIKIYNTPSASYLEVTPDSENDFGNYNCTAVNRIGQESSEFILVQADTPSSPSIDRVEPYSSTARVEFDEPEATGGVPILKYKAEWRALGEGEWHSRLYDAKEANVEGTITISGLKPETTYSVRLSAVNGKGVGEISLPSDFKTQPVREPSAPKLEGQMGEDGNSIKVNVIKQDDGGSPIRHYLIKYKAKHSSEWKPEIRLPSGIDHVMLKSLDWNAEYEVYVIAENQQGKSKPAHYAFRTSAQPTVIPASTSPTSGLGTAAIVGILIVIFVLLLVAVDVTCYFLNKCGLLMCIAVNLCGKSGPGAKGKDMEEGKAAFSKDESKEPIVEVRTEEERTPNHDGGKHTEPNETTPLTEPEHTADTAATVEDMLPSVTTGTTNSDTITETFATAQNSPTSETTTLTSSIAPPATAIPDSNAMSPGQATPAKAGASPVSPPPPSSTPKVAPLVDLSDTPSSAPATNNLSSSVLSNQGAVLSPSTVANMAETSKAAAGNKSAAPTPANLTSPPAPSEPKQEVSSTKSPEKEAAQPSTVKSPTETAKNPSNPKSEAASGGTTNPSQNEDFKMDEGTFKTPDIDLAKDVFAALGTTTPASVASGQARELASSTADSSVPAAPAKTEKTPVEDKSEVQATEIRHLQQK</sequence>
<name>NCAM1_CHICK</name>
<reference key="1">
    <citation type="journal article" date="1987" name="Science">
        <title>Neural cell adhesion molecule: structure, immunoglobulin-like domains, cell surface modulation, and alternative RNA splicing.</title>
        <authorList>
            <person name="Cunningham B.A."/>
            <person name="Hemperly J.J."/>
            <person name="Murray B.A."/>
            <person name="Prediger E.A."/>
            <person name="Brackenbury R."/>
            <person name="Edelman G.M."/>
        </authorList>
    </citation>
    <scope>NUCLEOTIDE SEQUENCE [GENOMIC DNA] OF 1-175</scope>
    <scope>PARTIAL PROTEIN SEQUENCE</scope>
</reference>
<reference key="2">
    <citation type="journal article" date="1986" name="Proc. Natl. Acad. Sci. U.S.A.">
        <title>Sequence of a cDNA clone encoding the polysialic acid-rich and cytoplasmic domains of the neural cell adhesion molecule N-CAM.</title>
        <authorList>
            <person name="Hemperly J.J."/>
            <person name="Murray B.A."/>
            <person name="Edelman G.M."/>
            <person name="Cunningham B.A."/>
        </authorList>
    </citation>
    <scope>NUCLEOTIDE SEQUENCE [GENOMIC DNA] OF 128-1091</scope>
    <scope>PARTIAL PROTEIN SEQUENCE</scope>
</reference>
<reference key="3">
    <citation type="journal article" date="1986" name="Proc. Natl. Acad. Sci. U.S.A.">
        <title>cDNA clones of the neural cell adhesion molecule (N-CAM) lacking a membrane-spanning region consistent with evidence for membrane attachment via a phosphatidylinositol intermediate.</title>
        <authorList>
            <person name="Hemperly J.J."/>
            <person name="Edelman G.M."/>
            <person name="Cunningham B.A."/>
        </authorList>
    </citation>
    <scope>NUCLEOTIDE SEQUENCE [GENOMIC DNA] (ISOFORM D)</scope>
</reference>
<reference key="4">
    <citation type="journal article" date="1986" name="J. Cell Biol.">
        <title>Cell surface modulation of the neural cell adhesion molecule resulting from alternative mRNA splicing in a tissue-specific developmental sequence.</title>
        <authorList>
            <person name="Murray B.A."/>
            <person name="Owens G.C."/>
            <person name="Prediger E.A."/>
            <person name="Crossin K.L."/>
            <person name="Cunningham B.A."/>
            <person name="Edelman G.M."/>
        </authorList>
    </citation>
    <scope>NUCLEOTIDE SEQUENCE [GENOMIC DNA] OF 810-1069</scope>
</reference>
<reference key="5">
    <citation type="journal article" date="1992" name="Genomics">
        <title>Conserved regulatory elements in the promoter region of the N-CAM gene.</title>
        <authorList>
            <person name="Colwell G."/>
            <person name="Li B."/>
            <person name="Forrest D."/>
            <person name="Brackenbury R."/>
        </authorList>
    </citation>
    <scope>NUCLEOTIDE SEQUENCE [GENOMIC DNA] OF 1-17</scope>
</reference>
<reference key="6">
    <citation type="submission" date="1993-08" db="EMBL/GenBank/DDBJ databases">
        <authorList>
            <person name="Sasner M."/>
            <person name="Covault J."/>
        </authorList>
    </citation>
    <scope>NUCLEOTIDE SEQUENCE [GENOMIC DNA] OF 1-17</scope>
    <source>
        <strain>White leghorn</strain>
        <tissue>Erythrocyte</tissue>
    </source>
</reference>
<reference key="7">
    <citation type="journal article" date="1986" name="J. Cell Biol.">
        <title>Topographic localization of the heparin-binding domain of the neural cell adhesion molecule N-CAM.</title>
        <authorList>
            <person name="Cole G.J."/>
            <person name="Loewy A."/>
            <person name="Cross N.V."/>
            <person name="Akeson R."/>
            <person name="Glaser L."/>
        </authorList>
    </citation>
    <scope>NUCLEOTIDE SEQUENCE [GENOMIC DNA] OF 20-29</scope>
</reference>
<reference key="8">
    <citation type="journal article" date="1992" name="J. Cell Biol.">
        <title>Identification of a peptide sequence involved in homophilic binding in the neural cell adhesion molecule NCAM.</title>
        <authorList>
            <person name="Rao Y."/>
            <person name="Wu X.F."/>
            <person name="Gariepy J."/>
            <person name="Rutishauser U."/>
            <person name="Siu C.H."/>
        </authorList>
    </citation>
    <scope>CELL-BINDING</scope>
</reference>
<reference key="9">
    <citation type="journal article" date="2001" name="J. Mol. Biol.">
        <title>Solution structure of the third immunoglobulin domain of the neural cell adhesion molecule N-CAM: can solution studies define the mechanism of homophilic binding?</title>
        <authorList>
            <person name="Atkins A.R."/>
            <person name="Chung J."/>
            <person name="Deechongkit S."/>
            <person name="Little E.B."/>
            <person name="Edelman G.M."/>
            <person name="Wright P.E."/>
            <person name="Cunningham B.A."/>
            <person name="Dyson H.J."/>
        </authorList>
    </citation>
    <scope>STRUCTURE BY NMR OF 202-307</scope>
</reference>
<dbReference type="EMBL" id="M15861">
    <property type="protein sequence ID" value="AAB59958.1"/>
    <property type="molecule type" value="Genomic_DNA"/>
</dbReference>
<dbReference type="EMBL" id="M15860">
    <property type="protein sequence ID" value="AAB59958.1"/>
    <property type="status" value="JOINED"/>
    <property type="molecule type" value="Genomic_DNA"/>
</dbReference>
<dbReference type="EMBL" id="M15922">
    <property type="protein sequence ID" value="AAB59958.1"/>
    <property type="status" value="JOINED"/>
    <property type="molecule type" value="Genomic_DNA"/>
</dbReference>
<dbReference type="EMBL" id="M15923">
    <property type="protein sequence ID" value="AAB59958.1"/>
    <property type="status" value="JOINED"/>
    <property type="molecule type" value="Genomic_DNA"/>
</dbReference>
<dbReference type="EMBL" id="M15924">
    <property type="protein sequence ID" value="AAB59958.1"/>
    <property type="status" value="JOINED"/>
    <property type="molecule type" value="Genomic_DNA"/>
</dbReference>
<dbReference type="EMBL" id="M21178">
    <property type="protein sequence ID" value="AAB59958.1"/>
    <property type="status" value="JOINED"/>
    <property type="molecule type" value="Genomic_DNA"/>
</dbReference>
<dbReference type="EMBL" id="M21179">
    <property type="protein sequence ID" value="AAB59958.1"/>
    <property type="status" value="JOINED"/>
    <property type="molecule type" value="Genomic_DNA"/>
</dbReference>
<dbReference type="EMBL" id="M21180">
    <property type="protein sequence ID" value="AAB59958.1"/>
    <property type="status" value="JOINED"/>
    <property type="molecule type" value="Genomic_DNA"/>
</dbReference>
<dbReference type="EMBL" id="M15929">
    <property type="protein sequence ID" value="AAB59958.1"/>
    <property type="status" value="JOINED"/>
    <property type="molecule type" value="Genomic_DNA"/>
</dbReference>
<dbReference type="EMBL" id="M15930">
    <property type="protein sequence ID" value="AAB59958.1"/>
    <property type="status" value="JOINED"/>
    <property type="molecule type" value="Genomic_DNA"/>
</dbReference>
<dbReference type="EMBL" id="M15931">
    <property type="protein sequence ID" value="AAB59958.1"/>
    <property type="status" value="JOINED"/>
    <property type="molecule type" value="Genomic_DNA"/>
</dbReference>
<dbReference type="EMBL" id="M15932">
    <property type="protein sequence ID" value="AAB59958.1"/>
    <property type="status" value="JOINED"/>
    <property type="molecule type" value="Genomic_DNA"/>
</dbReference>
<dbReference type="EMBL" id="M15933">
    <property type="protein sequence ID" value="AAB59958.1"/>
    <property type="status" value="JOINED"/>
    <property type="molecule type" value="Genomic_DNA"/>
</dbReference>
<dbReference type="EMBL" id="M15934">
    <property type="protein sequence ID" value="AAB59958.1"/>
    <property type="status" value="JOINED"/>
    <property type="molecule type" value="Genomic_DNA"/>
</dbReference>
<dbReference type="EMBL" id="L29437">
    <property type="protein sequence ID" value="AAB59958.1"/>
    <property type="status" value="JOINED"/>
    <property type="molecule type" value="Genomic_DNA"/>
</dbReference>
<dbReference type="EMBL" id="M15935">
    <property type="protein sequence ID" value="AAB59958.1"/>
    <property type="status" value="JOINED"/>
    <property type="molecule type" value="Genomic_DNA"/>
</dbReference>
<dbReference type="EMBL" id="M15937">
    <property type="protein sequence ID" value="AAB59958.1"/>
    <property type="status" value="JOINED"/>
    <property type="molecule type" value="Genomic_DNA"/>
</dbReference>
<dbReference type="EMBL" id="M15938">
    <property type="protein sequence ID" value="AAB59958.1"/>
    <property type="status" value="JOINED"/>
    <property type="molecule type" value="Genomic_DNA"/>
</dbReference>
<dbReference type="EMBL" id="M15939">
    <property type="protein sequence ID" value="AAB59958.1"/>
    <property type="status" value="JOINED"/>
    <property type="molecule type" value="Genomic_DNA"/>
</dbReference>
<dbReference type="EMBL" id="M15861">
    <property type="protein sequence ID" value="AAB59959.1"/>
    <property type="molecule type" value="Genomic_DNA"/>
</dbReference>
<dbReference type="EMBL" id="M15860">
    <property type="protein sequence ID" value="AAB59959.1"/>
    <property type="status" value="JOINED"/>
    <property type="molecule type" value="Genomic_DNA"/>
</dbReference>
<dbReference type="EMBL" id="M15922">
    <property type="protein sequence ID" value="AAB59959.1"/>
    <property type="status" value="JOINED"/>
    <property type="molecule type" value="Genomic_DNA"/>
</dbReference>
<dbReference type="EMBL" id="M15923">
    <property type="protein sequence ID" value="AAB59959.1"/>
    <property type="status" value="JOINED"/>
    <property type="molecule type" value="Genomic_DNA"/>
</dbReference>
<dbReference type="EMBL" id="M15924">
    <property type="protein sequence ID" value="AAB59959.1"/>
    <property type="status" value="JOINED"/>
    <property type="molecule type" value="Genomic_DNA"/>
</dbReference>
<dbReference type="EMBL" id="M21178">
    <property type="protein sequence ID" value="AAB59959.1"/>
    <property type="status" value="JOINED"/>
    <property type="molecule type" value="Genomic_DNA"/>
</dbReference>
<dbReference type="EMBL" id="M21179">
    <property type="protein sequence ID" value="AAB59959.1"/>
    <property type="status" value="JOINED"/>
    <property type="molecule type" value="Genomic_DNA"/>
</dbReference>
<dbReference type="EMBL" id="M21180">
    <property type="protein sequence ID" value="AAB59959.1"/>
    <property type="status" value="JOINED"/>
    <property type="molecule type" value="Genomic_DNA"/>
</dbReference>
<dbReference type="EMBL" id="M15929">
    <property type="protein sequence ID" value="AAB59959.1"/>
    <property type="status" value="JOINED"/>
    <property type="molecule type" value="Genomic_DNA"/>
</dbReference>
<dbReference type="EMBL" id="M15930">
    <property type="protein sequence ID" value="AAB59959.1"/>
    <property type="status" value="JOINED"/>
    <property type="molecule type" value="Genomic_DNA"/>
</dbReference>
<dbReference type="EMBL" id="M15931">
    <property type="protein sequence ID" value="AAB59959.1"/>
    <property type="status" value="JOINED"/>
    <property type="molecule type" value="Genomic_DNA"/>
</dbReference>
<dbReference type="EMBL" id="M15932">
    <property type="protein sequence ID" value="AAB59959.1"/>
    <property type="status" value="JOINED"/>
    <property type="molecule type" value="Genomic_DNA"/>
</dbReference>
<dbReference type="EMBL" id="M15934">
    <property type="protein sequence ID" value="AAB59959.1"/>
    <property type="status" value="JOINED"/>
    <property type="molecule type" value="Genomic_DNA"/>
</dbReference>
<dbReference type="EMBL" id="L29437">
    <property type="protein sequence ID" value="AAB59959.1"/>
    <property type="status" value="JOINED"/>
    <property type="molecule type" value="Genomic_DNA"/>
</dbReference>
<dbReference type="EMBL" id="M15935">
    <property type="protein sequence ID" value="AAB59959.1"/>
    <property type="status" value="JOINED"/>
    <property type="molecule type" value="Genomic_DNA"/>
</dbReference>
<dbReference type="EMBL" id="M15937">
    <property type="protein sequence ID" value="AAB59959.1"/>
    <property type="status" value="JOINED"/>
    <property type="molecule type" value="Genomic_DNA"/>
</dbReference>
<dbReference type="EMBL" id="M15939">
    <property type="protein sequence ID" value="AAB59959.1"/>
    <property type="status" value="JOINED"/>
    <property type="molecule type" value="Genomic_DNA"/>
</dbReference>
<dbReference type="EMBL" id="M15936">
    <property type="protein sequence ID" value="AAB59957.1"/>
    <property type="molecule type" value="Genomic_DNA"/>
</dbReference>
<dbReference type="EMBL" id="M15860">
    <property type="protein sequence ID" value="AAB59957.1"/>
    <property type="status" value="JOINED"/>
    <property type="molecule type" value="Genomic_DNA"/>
</dbReference>
<dbReference type="EMBL" id="M15922">
    <property type="protein sequence ID" value="AAB59957.1"/>
    <property type="status" value="JOINED"/>
    <property type="molecule type" value="Genomic_DNA"/>
</dbReference>
<dbReference type="EMBL" id="M15923">
    <property type="protein sequence ID" value="AAB59957.1"/>
    <property type="status" value="JOINED"/>
    <property type="molecule type" value="Genomic_DNA"/>
</dbReference>
<dbReference type="EMBL" id="M15924">
    <property type="protein sequence ID" value="AAB59957.1"/>
    <property type="status" value="JOINED"/>
    <property type="molecule type" value="Genomic_DNA"/>
</dbReference>
<dbReference type="EMBL" id="M21178">
    <property type="protein sequence ID" value="AAB59957.1"/>
    <property type="status" value="JOINED"/>
    <property type="molecule type" value="Genomic_DNA"/>
</dbReference>
<dbReference type="EMBL" id="M21179">
    <property type="protein sequence ID" value="AAB59957.1"/>
    <property type="status" value="JOINED"/>
    <property type="molecule type" value="Genomic_DNA"/>
</dbReference>
<dbReference type="EMBL" id="M21180">
    <property type="protein sequence ID" value="AAB59957.1"/>
    <property type="status" value="JOINED"/>
    <property type="molecule type" value="Genomic_DNA"/>
</dbReference>
<dbReference type="EMBL" id="M15929">
    <property type="protein sequence ID" value="AAB59957.1"/>
    <property type="status" value="JOINED"/>
    <property type="molecule type" value="Genomic_DNA"/>
</dbReference>
<dbReference type="EMBL" id="M15930">
    <property type="protein sequence ID" value="AAB59957.1"/>
    <property type="status" value="JOINED"/>
    <property type="molecule type" value="Genomic_DNA"/>
</dbReference>
<dbReference type="EMBL" id="M15931">
    <property type="protein sequence ID" value="AAB59957.1"/>
    <property type="status" value="JOINED"/>
    <property type="molecule type" value="Genomic_DNA"/>
</dbReference>
<dbReference type="EMBL" id="M15932">
    <property type="protein sequence ID" value="AAB59957.1"/>
    <property type="status" value="JOINED"/>
    <property type="molecule type" value="Genomic_DNA"/>
</dbReference>
<dbReference type="EMBL" id="M15934">
    <property type="protein sequence ID" value="AAB59957.1"/>
    <property type="status" value="JOINED"/>
    <property type="molecule type" value="Genomic_DNA"/>
</dbReference>
<dbReference type="EMBL" id="L29437">
    <property type="protein sequence ID" value="AAB59957.1"/>
    <property type="status" value="JOINED"/>
    <property type="molecule type" value="Genomic_DNA"/>
</dbReference>
<dbReference type="EMBL" id="M15935">
    <property type="protein sequence ID" value="AAB59957.1"/>
    <property type="status" value="JOINED"/>
    <property type="molecule type" value="Genomic_DNA"/>
</dbReference>
<dbReference type="EMBL" id="X04479">
    <property type="protein sequence ID" value="CAB51638.1"/>
    <property type="molecule type" value="Genomic_DNA"/>
</dbReference>
<dbReference type="EMBL" id="X70342">
    <property type="protein sequence ID" value="CAA49807.1"/>
    <property type="molecule type" value="Genomic_DNA"/>
</dbReference>
<dbReference type="EMBL" id="Z12128">
    <property type="protein sequence ID" value="CAA78113.1"/>
    <property type="molecule type" value="Genomic_DNA"/>
</dbReference>
<dbReference type="PIR" id="A43613">
    <property type="entry name" value="IJCHNL"/>
</dbReference>
<dbReference type="PDB" id="1IE5">
    <property type="method" value="NMR"/>
    <property type="chains" value="A=202-307"/>
</dbReference>
<dbReference type="PDBsum" id="1IE5"/>
<dbReference type="SMR" id="P13590"/>
<dbReference type="FunCoup" id="P13590">
    <property type="interactions" value="702"/>
</dbReference>
<dbReference type="IntAct" id="P13590">
    <property type="interactions" value="1"/>
</dbReference>
<dbReference type="STRING" id="9031.ENSGALP00000055001"/>
<dbReference type="GlyCosmos" id="P13590">
    <property type="glycosylation" value="6 sites, No reported glycans"/>
</dbReference>
<dbReference type="GlyGen" id="P13590">
    <property type="glycosylation" value="8 sites"/>
</dbReference>
<dbReference type="PaxDb" id="9031-ENSGALP00000012709"/>
<dbReference type="VEuPathDB" id="HostDB:geneid_428253"/>
<dbReference type="eggNOG" id="KOG3510">
    <property type="taxonomic scope" value="Eukaryota"/>
</dbReference>
<dbReference type="InParanoid" id="P13590"/>
<dbReference type="OrthoDB" id="10056271at2759"/>
<dbReference type="PhylomeDB" id="P13590"/>
<dbReference type="EvolutionaryTrace" id="P13590"/>
<dbReference type="PRO" id="PR:P13590"/>
<dbReference type="Proteomes" id="UP000000539">
    <property type="component" value="Unassembled WGS sequence"/>
</dbReference>
<dbReference type="GO" id="GO:0005886">
    <property type="term" value="C:plasma membrane"/>
    <property type="evidence" value="ECO:0000304"/>
    <property type="project" value="Reactome"/>
</dbReference>
<dbReference type="GO" id="GO:0099560">
    <property type="term" value="P:synaptic membrane adhesion"/>
    <property type="evidence" value="ECO:0000314"/>
    <property type="project" value="SynGO"/>
</dbReference>
<dbReference type="CDD" id="cd00063">
    <property type="entry name" value="FN3"/>
    <property type="match status" value="2"/>
</dbReference>
<dbReference type="CDD" id="cd00096">
    <property type="entry name" value="Ig"/>
    <property type="match status" value="2"/>
</dbReference>
<dbReference type="CDD" id="cd05865">
    <property type="entry name" value="IgI_1_NCAM-1"/>
    <property type="match status" value="1"/>
</dbReference>
<dbReference type="CDD" id="cd05730">
    <property type="entry name" value="IgI_3_NCAM-1"/>
    <property type="match status" value="1"/>
</dbReference>
<dbReference type="CDD" id="cd05869">
    <property type="entry name" value="IgI_NCAM-1"/>
    <property type="match status" value="1"/>
</dbReference>
<dbReference type="FunFam" id="2.60.40.10:FF:000086">
    <property type="entry name" value="Neural cell adhesion molecule 1"/>
    <property type="match status" value="1"/>
</dbReference>
<dbReference type="FunFam" id="2.60.40.10:FF:000173">
    <property type="entry name" value="Neural cell adhesion molecule 1"/>
    <property type="match status" value="1"/>
</dbReference>
<dbReference type="FunFam" id="2.60.40.10:FF:000151">
    <property type="entry name" value="neural cell adhesion molecule 1 isoform X1"/>
    <property type="match status" value="1"/>
</dbReference>
<dbReference type="FunFam" id="2.60.40.10:FF:000137">
    <property type="entry name" value="neural cell adhesion molecule 1 isoform X2"/>
    <property type="match status" value="1"/>
</dbReference>
<dbReference type="FunFam" id="2.60.40.10:FF:000149">
    <property type="entry name" value="neural cell adhesion molecule 1 isoform X2"/>
    <property type="match status" value="1"/>
</dbReference>
<dbReference type="FunFam" id="2.60.40.10:FF:000159">
    <property type="entry name" value="neural cell adhesion molecule 1 isoform X2"/>
    <property type="match status" value="1"/>
</dbReference>
<dbReference type="FunFam" id="2.60.40.10:FF:000221">
    <property type="entry name" value="neural cell adhesion molecule 1 isoform X2"/>
    <property type="match status" value="1"/>
</dbReference>
<dbReference type="Gene3D" id="2.60.40.10">
    <property type="entry name" value="Immunoglobulins"/>
    <property type="match status" value="7"/>
</dbReference>
<dbReference type="InterPro" id="IPR003961">
    <property type="entry name" value="FN3_dom"/>
</dbReference>
<dbReference type="InterPro" id="IPR036116">
    <property type="entry name" value="FN3_sf"/>
</dbReference>
<dbReference type="InterPro" id="IPR007110">
    <property type="entry name" value="Ig-like_dom"/>
</dbReference>
<dbReference type="InterPro" id="IPR036179">
    <property type="entry name" value="Ig-like_dom_sf"/>
</dbReference>
<dbReference type="InterPro" id="IPR013783">
    <property type="entry name" value="Ig-like_fold"/>
</dbReference>
<dbReference type="InterPro" id="IPR013098">
    <property type="entry name" value="Ig_I-set"/>
</dbReference>
<dbReference type="InterPro" id="IPR003599">
    <property type="entry name" value="Ig_sub"/>
</dbReference>
<dbReference type="InterPro" id="IPR003598">
    <property type="entry name" value="Ig_sub2"/>
</dbReference>
<dbReference type="InterPro" id="IPR051170">
    <property type="entry name" value="Neural/epithelial_adhesion"/>
</dbReference>
<dbReference type="InterPro" id="IPR009138">
    <property type="entry name" value="Neural_cell_adh"/>
</dbReference>
<dbReference type="PANTHER" id="PTHR12231">
    <property type="entry name" value="CTX-RELATED TYPE I TRANSMEMBRANE PROTEIN"/>
    <property type="match status" value="1"/>
</dbReference>
<dbReference type="PANTHER" id="PTHR12231:SF239">
    <property type="entry name" value="NEURAL CELL ADHESION MOLECULE 1"/>
    <property type="match status" value="1"/>
</dbReference>
<dbReference type="Pfam" id="PF00041">
    <property type="entry name" value="fn3"/>
    <property type="match status" value="2"/>
</dbReference>
<dbReference type="Pfam" id="PF07679">
    <property type="entry name" value="I-set"/>
    <property type="match status" value="3"/>
</dbReference>
<dbReference type="Pfam" id="PF13927">
    <property type="entry name" value="Ig_3"/>
    <property type="match status" value="2"/>
</dbReference>
<dbReference type="PRINTS" id="PR01838">
    <property type="entry name" value="NCAMFAMILY"/>
</dbReference>
<dbReference type="SMART" id="SM00060">
    <property type="entry name" value="FN3"/>
    <property type="match status" value="2"/>
</dbReference>
<dbReference type="SMART" id="SM00409">
    <property type="entry name" value="IG"/>
    <property type="match status" value="5"/>
</dbReference>
<dbReference type="SMART" id="SM00408">
    <property type="entry name" value="IGc2"/>
    <property type="match status" value="5"/>
</dbReference>
<dbReference type="SUPFAM" id="SSF49265">
    <property type="entry name" value="Fibronectin type III"/>
    <property type="match status" value="1"/>
</dbReference>
<dbReference type="SUPFAM" id="SSF48726">
    <property type="entry name" value="Immunoglobulin"/>
    <property type="match status" value="5"/>
</dbReference>
<dbReference type="PROSITE" id="PS50853">
    <property type="entry name" value="FN3"/>
    <property type="match status" value="2"/>
</dbReference>
<dbReference type="PROSITE" id="PS50835">
    <property type="entry name" value="IG_LIKE"/>
    <property type="match status" value="5"/>
</dbReference>